<dbReference type="EC" id="1.1.1.25" evidence="1"/>
<dbReference type="EMBL" id="CP000919">
    <property type="protein sequence ID" value="ACO19871.1"/>
    <property type="molecule type" value="Genomic_DNA"/>
</dbReference>
<dbReference type="RefSeq" id="WP_000762474.1">
    <property type="nucleotide sequence ID" value="NC_012466.1"/>
</dbReference>
<dbReference type="SMR" id="C1CEW5"/>
<dbReference type="KEGG" id="sjj:SPJ_1276"/>
<dbReference type="HOGENOM" id="CLU_044063_4_4_9"/>
<dbReference type="UniPathway" id="UPA00053">
    <property type="reaction ID" value="UER00087"/>
</dbReference>
<dbReference type="Proteomes" id="UP000002206">
    <property type="component" value="Chromosome"/>
</dbReference>
<dbReference type="GO" id="GO:0050661">
    <property type="term" value="F:NADP binding"/>
    <property type="evidence" value="ECO:0007669"/>
    <property type="project" value="InterPro"/>
</dbReference>
<dbReference type="GO" id="GO:0004764">
    <property type="term" value="F:shikimate 3-dehydrogenase (NADP+) activity"/>
    <property type="evidence" value="ECO:0007669"/>
    <property type="project" value="UniProtKB-UniRule"/>
</dbReference>
<dbReference type="GO" id="GO:0008652">
    <property type="term" value="P:amino acid biosynthetic process"/>
    <property type="evidence" value="ECO:0007669"/>
    <property type="project" value="UniProtKB-KW"/>
</dbReference>
<dbReference type="GO" id="GO:0009073">
    <property type="term" value="P:aromatic amino acid family biosynthetic process"/>
    <property type="evidence" value="ECO:0007669"/>
    <property type="project" value="UniProtKB-KW"/>
</dbReference>
<dbReference type="GO" id="GO:0009423">
    <property type="term" value="P:chorismate biosynthetic process"/>
    <property type="evidence" value="ECO:0007669"/>
    <property type="project" value="UniProtKB-UniRule"/>
</dbReference>
<dbReference type="GO" id="GO:0019632">
    <property type="term" value="P:shikimate metabolic process"/>
    <property type="evidence" value="ECO:0007669"/>
    <property type="project" value="InterPro"/>
</dbReference>
<dbReference type="CDD" id="cd01065">
    <property type="entry name" value="NAD_bind_Shikimate_DH"/>
    <property type="match status" value="1"/>
</dbReference>
<dbReference type="FunFam" id="3.40.50.10860:FF:000004">
    <property type="entry name" value="Quinate/shikimate dehydrogenase"/>
    <property type="match status" value="1"/>
</dbReference>
<dbReference type="FunFam" id="3.40.50.720:FF:000505">
    <property type="entry name" value="Shikimate dehydrogenase (NADP(+))"/>
    <property type="match status" value="1"/>
</dbReference>
<dbReference type="Gene3D" id="3.40.50.10860">
    <property type="entry name" value="Leucine Dehydrogenase, chain A, domain 1"/>
    <property type="match status" value="1"/>
</dbReference>
<dbReference type="Gene3D" id="3.40.50.720">
    <property type="entry name" value="NAD(P)-binding Rossmann-like Domain"/>
    <property type="match status" value="1"/>
</dbReference>
<dbReference type="HAMAP" id="MF_00222">
    <property type="entry name" value="Shikimate_DH_AroE"/>
    <property type="match status" value="1"/>
</dbReference>
<dbReference type="InterPro" id="IPR046346">
    <property type="entry name" value="Aminoacid_DH-like_N_sf"/>
</dbReference>
<dbReference type="InterPro" id="IPR036291">
    <property type="entry name" value="NAD(P)-bd_dom_sf"/>
</dbReference>
<dbReference type="InterPro" id="IPR041121">
    <property type="entry name" value="SDH_C"/>
</dbReference>
<dbReference type="InterPro" id="IPR011342">
    <property type="entry name" value="Shikimate_DH"/>
</dbReference>
<dbReference type="InterPro" id="IPR013708">
    <property type="entry name" value="Shikimate_DH-bd_N"/>
</dbReference>
<dbReference type="InterPro" id="IPR022893">
    <property type="entry name" value="Shikimate_DH_fam"/>
</dbReference>
<dbReference type="NCBIfam" id="TIGR00507">
    <property type="entry name" value="aroE"/>
    <property type="match status" value="1"/>
</dbReference>
<dbReference type="NCBIfam" id="NF001315">
    <property type="entry name" value="PRK00258.2-4"/>
    <property type="match status" value="1"/>
</dbReference>
<dbReference type="PANTHER" id="PTHR21089:SF1">
    <property type="entry name" value="BIFUNCTIONAL 3-DEHYDROQUINATE DEHYDRATASE_SHIKIMATE DEHYDROGENASE, CHLOROPLASTIC"/>
    <property type="match status" value="1"/>
</dbReference>
<dbReference type="PANTHER" id="PTHR21089">
    <property type="entry name" value="SHIKIMATE DEHYDROGENASE"/>
    <property type="match status" value="1"/>
</dbReference>
<dbReference type="Pfam" id="PF18317">
    <property type="entry name" value="SDH_C"/>
    <property type="match status" value="1"/>
</dbReference>
<dbReference type="Pfam" id="PF08501">
    <property type="entry name" value="Shikimate_dh_N"/>
    <property type="match status" value="1"/>
</dbReference>
<dbReference type="SUPFAM" id="SSF53223">
    <property type="entry name" value="Aminoacid dehydrogenase-like, N-terminal domain"/>
    <property type="match status" value="1"/>
</dbReference>
<dbReference type="SUPFAM" id="SSF51735">
    <property type="entry name" value="NAD(P)-binding Rossmann-fold domains"/>
    <property type="match status" value="1"/>
</dbReference>
<proteinExistence type="inferred from homology"/>
<keyword id="KW-0028">Amino-acid biosynthesis</keyword>
<keyword id="KW-0057">Aromatic amino acid biosynthesis</keyword>
<keyword id="KW-0521">NADP</keyword>
<keyword id="KW-0560">Oxidoreductase</keyword>
<accession>C1CEW5</accession>
<feature type="chain" id="PRO_1000124898" description="Shikimate dehydrogenase (NADP(+))">
    <location>
        <begin position="1"/>
        <end position="284"/>
    </location>
</feature>
<feature type="active site" description="Proton acceptor" evidence="1">
    <location>
        <position position="71"/>
    </location>
</feature>
<feature type="binding site" evidence="1">
    <location>
        <begin position="20"/>
        <end position="22"/>
    </location>
    <ligand>
        <name>shikimate</name>
        <dbReference type="ChEBI" id="CHEBI:36208"/>
    </ligand>
</feature>
<feature type="binding site" evidence="1">
    <location>
        <position position="67"/>
    </location>
    <ligand>
        <name>shikimate</name>
        <dbReference type="ChEBI" id="CHEBI:36208"/>
    </ligand>
</feature>
<feature type="binding site" evidence="1">
    <location>
        <position position="83"/>
    </location>
    <ligand>
        <name>NADP(+)</name>
        <dbReference type="ChEBI" id="CHEBI:58349"/>
    </ligand>
</feature>
<feature type="binding site" evidence="1">
    <location>
        <position position="92"/>
    </location>
    <ligand>
        <name>shikimate</name>
        <dbReference type="ChEBI" id="CHEBI:36208"/>
    </ligand>
</feature>
<feature type="binding site" evidence="1">
    <location>
        <position position="107"/>
    </location>
    <ligand>
        <name>shikimate</name>
        <dbReference type="ChEBI" id="CHEBI:36208"/>
    </ligand>
</feature>
<feature type="binding site" evidence="1">
    <location>
        <begin position="129"/>
        <end position="133"/>
    </location>
    <ligand>
        <name>NADP(+)</name>
        <dbReference type="ChEBI" id="CHEBI:58349"/>
    </ligand>
</feature>
<feature type="binding site" evidence="1">
    <location>
        <position position="227"/>
    </location>
    <ligand>
        <name>NADP(+)</name>
        <dbReference type="ChEBI" id="CHEBI:58349"/>
    </ligand>
</feature>
<feature type="binding site" evidence="1">
    <location>
        <position position="229"/>
    </location>
    <ligand>
        <name>shikimate</name>
        <dbReference type="ChEBI" id="CHEBI:36208"/>
    </ligand>
</feature>
<feature type="binding site" evidence="1">
    <location>
        <position position="250"/>
    </location>
    <ligand>
        <name>NADP(+)</name>
        <dbReference type="ChEBI" id="CHEBI:58349"/>
    </ligand>
</feature>
<name>AROE_STRZJ</name>
<protein>
    <recommendedName>
        <fullName evidence="1">Shikimate dehydrogenase (NADP(+))</fullName>
        <shortName evidence="1">SDH</shortName>
        <ecNumber evidence="1">1.1.1.25</ecNumber>
    </recommendedName>
</protein>
<sequence>MKLDGYTRLAAVVANPIKHSISPFIHNRAFEATATNGAYVAWEIEASDLAETVANIRRYQMFGINLSMPYKEQVIPYLDKLSDEARLIGAVNTVVNENGNLIGYNTDGKGFFKCLPSFTISGKKMTLLGAGGAAKSILAQAILDGVSQISVFVRSVSMEKTRPYLDKLQEQTGFKVDLCALENVSELQARIAESDLLVNATSVGMDGQSSPVPENIVLPETLLVADIIYQPFETPFLKWARSQGNPAVNGLGMLLYQAAEAFQLWTGKEMPTEEIWQSLTEKYQ</sequence>
<organism>
    <name type="scientific">Streptococcus pneumoniae (strain JJA)</name>
    <dbReference type="NCBI Taxonomy" id="488222"/>
    <lineage>
        <taxon>Bacteria</taxon>
        <taxon>Bacillati</taxon>
        <taxon>Bacillota</taxon>
        <taxon>Bacilli</taxon>
        <taxon>Lactobacillales</taxon>
        <taxon>Streptococcaceae</taxon>
        <taxon>Streptococcus</taxon>
    </lineage>
</organism>
<reference key="1">
    <citation type="journal article" date="2010" name="Genome Biol.">
        <title>Structure and dynamics of the pan-genome of Streptococcus pneumoniae and closely related species.</title>
        <authorList>
            <person name="Donati C."/>
            <person name="Hiller N.L."/>
            <person name="Tettelin H."/>
            <person name="Muzzi A."/>
            <person name="Croucher N.J."/>
            <person name="Angiuoli S.V."/>
            <person name="Oggioni M."/>
            <person name="Dunning Hotopp J.C."/>
            <person name="Hu F.Z."/>
            <person name="Riley D.R."/>
            <person name="Covacci A."/>
            <person name="Mitchell T.J."/>
            <person name="Bentley S.D."/>
            <person name="Kilian M."/>
            <person name="Ehrlich G.D."/>
            <person name="Rappuoli R."/>
            <person name="Moxon E.R."/>
            <person name="Masignani V."/>
        </authorList>
    </citation>
    <scope>NUCLEOTIDE SEQUENCE [LARGE SCALE GENOMIC DNA]</scope>
    <source>
        <strain>JJA</strain>
    </source>
</reference>
<evidence type="ECO:0000255" key="1">
    <source>
        <dbReference type="HAMAP-Rule" id="MF_00222"/>
    </source>
</evidence>
<comment type="function">
    <text evidence="1">Involved in the biosynthesis of the chorismate, which leads to the biosynthesis of aromatic amino acids. Catalyzes the reversible NADPH linked reduction of 3-dehydroshikimate (DHSA) to yield shikimate (SA).</text>
</comment>
<comment type="catalytic activity">
    <reaction evidence="1">
        <text>shikimate + NADP(+) = 3-dehydroshikimate + NADPH + H(+)</text>
        <dbReference type="Rhea" id="RHEA:17737"/>
        <dbReference type="ChEBI" id="CHEBI:15378"/>
        <dbReference type="ChEBI" id="CHEBI:16630"/>
        <dbReference type="ChEBI" id="CHEBI:36208"/>
        <dbReference type="ChEBI" id="CHEBI:57783"/>
        <dbReference type="ChEBI" id="CHEBI:58349"/>
        <dbReference type="EC" id="1.1.1.25"/>
    </reaction>
</comment>
<comment type="pathway">
    <text evidence="1">Metabolic intermediate biosynthesis; chorismate biosynthesis; chorismate from D-erythrose 4-phosphate and phosphoenolpyruvate: step 4/7.</text>
</comment>
<comment type="subunit">
    <text evidence="1">Homodimer.</text>
</comment>
<comment type="similarity">
    <text evidence="1">Belongs to the shikimate dehydrogenase family.</text>
</comment>
<gene>
    <name evidence="1" type="primary">aroE</name>
    <name type="ordered locus">SPJ_1276</name>
</gene>